<keyword id="KW-0408">Iron</keyword>
<keyword id="KW-0411">Iron-sulfur</keyword>
<keyword id="KW-0479">Metal-binding</keyword>
<gene>
    <name evidence="1" type="primary">erpA</name>
    <name type="ordered locus">YPDSF_2970</name>
</gene>
<feature type="chain" id="PRO_0000311585" description="Iron-sulfur cluster insertion protein ErpA">
    <location>
        <begin position="1"/>
        <end position="114"/>
    </location>
</feature>
<feature type="binding site" evidence="1">
    <location>
        <position position="42"/>
    </location>
    <ligand>
        <name>iron-sulfur cluster</name>
        <dbReference type="ChEBI" id="CHEBI:30408"/>
    </ligand>
</feature>
<feature type="binding site" evidence="1">
    <location>
        <position position="106"/>
    </location>
    <ligand>
        <name>iron-sulfur cluster</name>
        <dbReference type="ChEBI" id="CHEBI:30408"/>
    </ligand>
</feature>
<feature type="binding site" evidence="1">
    <location>
        <position position="108"/>
    </location>
    <ligand>
        <name>iron-sulfur cluster</name>
        <dbReference type="ChEBI" id="CHEBI:30408"/>
    </ligand>
</feature>
<reference key="1">
    <citation type="submission" date="2007-02" db="EMBL/GenBank/DDBJ databases">
        <title>Complete sequence of chromosome of Yersinia pestis Pestoides F.</title>
        <authorList>
            <consortium name="US DOE Joint Genome Institute"/>
            <person name="Copeland A."/>
            <person name="Lucas S."/>
            <person name="Lapidus A."/>
            <person name="Barry K."/>
            <person name="Detter J.C."/>
            <person name="Glavina del Rio T."/>
            <person name="Hammon N."/>
            <person name="Israni S."/>
            <person name="Dalin E."/>
            <person name="Tice H."/>
            <person name="Pitluck S."/>
            <person name="Di Bartolo G."/>
            <person name="Chain P."/>
            <person name="Malfatti S."/>
            <person name="Shin M."/>
            <person name="Vergez L."/>
            <person name="Schmutz J."/>
            <person name="Larimer F."/>
            <person name="Land M."/>
            <person name="Hauser L."/>
            <person name="Worsham P."/>
            <person name="Chu M."/>
            <person name="Bearden S."/>
            <person name="Garcia E."/>
            <person name="Richardson P."/>
        </authorList>
    </citation>
    <scope>NUCLEOTIDE SEQUENCE [LARGE SCALE GENOMIC DNA]</scope>
    <source>
        <strain>Pestoides F</strain>
    </source>
</reference>
<protein>
    <recommendedName>
        <fullName evidence="1">Iron-sulfur cluster insertion protein ErpA</fullName>
    </recommendedName>
</protein>
<accession>A4TPW8</accession>
<comment type="function">
    <text evidence="1">Required for insertion of 4Fe-4S clusters for at least IspG.</text>
</comment>
<comment type="cofactor">
    <cofactor evidence="1">
        <name>iron-sulfur cluster</name>
        <dbReference type="ChEBI" id="CHEBI:30408"/>
    </cofactor>
    <text evidence="1">Binds 1 iron-sulfur cluster per subunit.</text>
</comment>
<comment type="subunit">
    <text evidence="1">Homodimer.</text>
</comment>
<comment type="similarity">
    <text evidence="1">Belongs to the HesB/IscA family.</text>
</comment>
<dbReference type="EMBL" id="CP000668">
    <property type="protein sequence ID" value="ABP41330.1"/>
    <property type="molecule type" value="Genomic_DNA"/>
</dbReference>
<dbReference type="PIR" id="AE0411">
    <property type="entry name" value="AE0411"/>
</dbReference>
<dbReference type="RefSeq" id="WP_002209365.1">
    <property type="nucleotide sequence ID" value="NZ_CP009715.1"/>
</dbReference>
<dbReference type="SMR" id="A4TPW8"/>
<dbReference type="GeneID" id="96664241"/>
<dbReference type="KEGG" id="ypp:YPDSF_2970"/>
<dbReference type="PATRIC" id="fig|386656.14.peg.1394"/>
<dbReference type="GO" id="GO:0005829">
    <property type="term" value="C:cytosol"/>
    <property type="evidence" value="ECO:0007669"/>
    <property type="project" value="TreeGrafter"/>
</dbReference>
<dbReference type="GO" id="GO:0051537">
    <property type="term" value="F:2 iron, 2 sulfur cluster binding"/>
    <property type="evidence" value="ECO:0007669"/>
    <property type="project" value="TreeGrafter"/>
</dbReference>
<dbReference type="GO" id="GO:0051539">
    <property type="term" value="F:4 iron, 4 sulfur cluster binding"/>
    <property type="evidence" value="ECO:0007669"/>
    <property type="project" value="TreeGrafter"/>
</dbReference>
<dbReference type="GO" id="GO:0005506">
    <property type="term" value="F:iron ion binding"/>
    <property type="evidence" value="ECO:0007669"/>
    <property type="project" value="UniProtKB-UniRule"/>
</dbReference>
<dbReference type="GO" id="GO:0016226">
    <property type="term" value="P:iron-sulfur cluster assembly"/>
    <property type="evidence" value="ECO:0007669"/>
    <property type="project" value="UniProtKB-UniRule"/>
</dbReference>
<dbReference type="FunFam" id="2.60.300.12:FF:000002">
    <property type="entry name" value="Iron-sulfur cluster insertion protein ErpA"/>
    <property type="match status" value="1"/>
</dbReference>
<dbReference type="Gene3D" id="2.60.300.12">
    <property type="entry name" value="HesB-like domain"/>
    <property type="match status" value="1"/>
</dbReference>
<dbReference type="HAMAP" id="MF_01380">
    <property type="entry name" value="Fe_S_insert_ErpA"/>
    <property type="match status" value="1"/>
</dbReference>
<dbReference type="InterPro" id="IPR000361">
    <property type="entry name" value="FeS_biogenesis"/>
</dbReference>
<dbReference type="InterPro" id="IPR016092">
    <property type="entry name" value="FeS_cluster_insertion"/>
</dbReference>
<dbReference type="InterPro" id="IPR017870">
    <property type="entry name" value="FeS_cluster_insertion_CS"/>
</dbReference>
<dbReference type="InterPro" id="IPR023063">
    <property type="entry name" value="FeS_cluster_insertion_RrpA"/>
</dbReference>
<dbReference type="InterPro" id="IPR035903">
    <property type="entry name" value="HesB-like_dom_sf"/>
</dbReference>
<dbReference type="NCBIfam" id="TIGR00049">
    <property type="entry name" value="iron-sulfur cluster assembly accessory protein"/>
    <property type="match status" value="1"/>
</dbReference>
<dbReference type="NCBIfam" id="NF010147">
    <property type="entry name" value="PRK13623.1"/>
    <property type="match status" value="1"/>
</dbReference>
<dbReference type="PANTHER" id="PTHR43011">
    <property type="entry name" value="IRON-SULFUR CLUSTER ASSEMBLY 2 HOMOLOG, MITOCHONDRIAL"/>
    <property type="match status" value="1"/>
</dbReference>
<dbReference type="PANTHER" id="PTHR43011:SF1">
    <property type="entry name" value="IRON-SULFUR CLUSTER ASSEMBLY 2 HOMOLOG, MITOCHONDRIAL"/>
    <property type="match status" value="1"/>
</dbReference>
<dbReference type="Pfam" id="PF01521">
    <property type="entry name" value="Fe-S_biosyn"/>
    <property type="match status" value="1"/>
</dbReference>
<dbReference type="SUPFAM" id="SSF89360">
    <property type="entry name" value="HesB-like domain"/>
    <property type="match status" value="1"/>
</dbReference>
<dbReference type="PROSITE" id="PS01152">
    <property type="entry name" value="HESB"/>
    <property type="match status" value="1"/>
</dbReference>
<sequence>MSNETVLPLQFTEAAAKKVKLLISDEENPNLKLRVYITGGGCSGFQYGFTFDDQVNDGDMTIEKQGVELVVDPMSLQYLVGGAVDYTEGLEGSRFIVTNPNAKSTCGCGSSFSI</sequence>
<evidence type="ECO:0000255" key="1">
    <source>
        <dbReference type="HAMAP-Rule" id="MF_01380"/>
    </source>
</evidence>
<name>ERPA_YERPP</name>
<organism>
    <name type="scientific">Yersinia pestis (strain Pestoides F)</name>
    <dbReference type="NCBI Taxonomy" id="386656"/>
    <lineage>
        <taxon>Bacteria</taxon>
        <taxon>Pseudomonadati</taxon>
        <taxon>Pseudomonadota</taxon>
        <taxon>Gammaproteobacteria</taxon>
        <taxon>Enterobacterales</taxon>
        <taxon>Yersiniaceae</taxon>
        <taxon>Yersinia</taxon>
    </lineage>
</organism>
<proteinExistence type="inferred from homology"/>